<gene>
    <name evidence="1" type="primary">tgt</name>
    <name type="ordered locus">Dtur_1606</name>
</gene>
<reference key="1">
    <citation type="journal article" date="2016" name="Front. Microbiol.">
        <title>The complete genome sequence of hyperthermophile Dictyoglomus turgidum DSM 6724 reveals a specialized carbohydrate fermentor.</title>
        <authorList>
            <person name="Brumm P.J."/>
            <person name="Gowda K."/>
            <person name="Robb F.T."/>
            <person name="Mead D.A."/>
        </authorList>
    </citation>
    <scope>NUCLEOTIDE SEQUENCE [LARGE SCALE GENOMIC DNA]</scope>
    <source>
        <strain>DSM 6724 / Z-1310</strain>
    </source>
</reference>
<accession>B8E2N5</accession>
<dbReference type="EC" id="2.4.2.29" evidence="1"/>
<dbReference type="EMBL" id="CP001251">
    <property type="protein sequence ID" value="ACK42879.1"/>
    <property type="molecule type" value="Genomic_DNA"/>
</dbReference>
<dbReference type="RefSeq" id="WP_012583954.1">
    <property type="nucleotide sequence ID" value="NC_011661.1"/>
</dbReference>
<dbReference type="RefSeq" id="YP_002353493.1">
    <property type="nucleotide sequence ID" value="NC_011661.1"/>
</dbReference>
<dbReference type="SMR" id="B8E2N5"/>
<dbReference type="FunCoup" id="B8E2N5">
    <property type="interactions" value="384"/>
</dbReference>
<dbReference type="STRING" id="515635.Dtur_1606"/>
<dbReference type="EnsemblBacteria" id="ACK42879">
    <property type="protein sequence ID" value="ACK42879"/>
    <property type="gene ID" value="Dtur_1606"/>
</dbReference>
<dbReference type="KEGG" id="dtu:Dtur_1606"/>
<dbReference type="PATRIC" id="fig|515635.4.peg.1655"/>
<dbReference type="eggNOG" id="COG0343">
    <property type="taxonomic scope" value="Bacteria"/>
</dbReference>
<dbReference type="HOGENOM" id="CLU_022060_0_1_0"/>
<dbReference type="InParanoid" id="B8E2N5"/>
<dbReference type="OrthoDB" id="9805417at2"/>
<dbReference type="UniPathway" id="UPA00392"/>
<dbReference type="Proteomes" id="UP000007719">
    <property type="component" value="Chromosome"/>
</dbReference>
<dbReference type="GO" id="GO:0005737">
    <property type="term" value="C:cytoplasm"/>
    <property type="evidence" value="ECO:0000318"/>
    <property type="project" value="GO_Central"/>
</dbReference>
<dbReference type="GO" id="GO:0005829">
    <property type="term" value="C:cytosol"/>
    <property type="evidence" value="ECO:0000318"/>
    <property type="project" value="GO_Central"/>
</dbReference>
<dbReference type="GO" id="GO:0046872">
    <property type="term" value="F:metal ion binding"/>
    <property type="evidence" value="ECO:0007669"/>
    <property type="project" value="UniProtKB-KW"/>
</dbReference>
<dbReference type="GO" id="GO:0008479">
    <property type="term" value="F:tRNA-guanosine(34) queuine transglycosylase activity"/>
    <property type="evidence" value="ECO:0007669"/>
    <property type="project" value="UniProtKB-UniRule"/>
</dbReference>
<dbReference type="GO" id="GO:0008616">
    <property type="term" value="P:queuosine biosynthetic process"/>
    <property type="evidence" value="ECO:0000318"/>
    <property type="project" value="GO_Central"/>
</dbReference>
<dbReference type="GO" id="GO:0002099">
    <property type="term" value="P:tRNA wobble guanine modification"/>
    <property type="evidence" value="ECO:0000318"/>
    <property type="project" value="GO_Central"/>
</dbReference>
<dbReference type="GO" id="GO:0101030">
    <property type="term" value="P:tRNA-guanine transglycosylation"/>
    <property type="evidence" value="ECO:0007669"/>
    <property type="project" value="InterPro"/>
</dbReference>
<dbReference type="FunFam" id="3.20.20.105:FF:000001">
    <property type="entry name" value="Queuine tRNA-ribosyltransferase"/>
    <property type="match status" value="1"/>
</dbReference>
<dbReference type="Gene3D" id="3.20.20.105">
    <property type="entry name" value="Queuine tRNA-ribosyltransferase-like"/>
    <property type="match status" value="1"/>
</dbReference>
<dbReference type="HAMAP" id="MF_00168">
    <property type="entry name" value="Q_tRNA_Tgt"/>
    <property type="match status" value="1"/>
</dbReference>
<dbReference type="InterPro" id="IPR050076">
    <property type="entry name" value="ArchSynthase1/Queuine_TRR"/>
</dbReference>
<dbReference type="InterPro" id="IPR004803">
    <property type="entry name" value="TGT"/>
</dbReference>
<dbReference type="InterPro" id="IPR036511">
    <property type="entry name" value="TGT-like_sf"/>
</dbReference>
<dbReference type="InterPro" id="IPR002616">
    <property type="entry name" value="tRNA_ribo_trans-like"/>
</dbReference>
<dbReference type="NCBIfam" id="TIGR00430">
    <property type="entry name" value="Q_tRNA_tgt"/>
    <property type="match status" value="1"/>
</dbReference>
<dbReference type="NCBIfam" id="TIGR00449">
    <property type="entry name" value="tgt_general"/>
    <property type="match status" value="1"/>
</dbReference>
<dbReference type="PANTHER" id="PTHR46499">
    <property type="entry name" value="QUEUINE TRNA-RIBOSYLTRANSFERASE"/>
    <property type="match status" value="1"/>
</dbReference>
<dbReference type="PANTHER" id="PTHR46499:SF1">
    <property type="entry name" value="QUEUINE TRNA-RIBOSYLTRANSFERASE"/>
    <property type="match status" value="1"/>
</dbReference>
<dbReference type="Pfam" id="PF01702">
    <property type="entry name" value="TGT"/>
    <property type="match status" value="1"/>
</dbReference>
<dbReference type="SUPFAM" id="SSF51713">
    <property type="entry name" value="tRNA-guanine transglycosylase"/>
    <property type="match status" value="1"/>
</dbReference>
<evidence type="ECO:0000255" key="1">
    <source>
        <dbReference type="HAMAP-Rule" id="MF_00168"/>
    </source>
</evidence>
<comment type="function">
    <text evidence="1">Catalyzes the base-exchange of a guanine (G) residue with the queuine precursor 7-aminomethyl-7-deazaguanine (PreQ1) at position 34 (anticodon wobble position) in tRNAs with GU(N) anticodons (tRNA-Asp, -Asn, -His and -Tyr). Catalysis occurs through a double-displacement mechanism. The nucleophile active site attacks the C1' of nucleotide 34 to detach the guanine base from the RNA, forming a covalent enzyme-RNA intermediate. The proton acceptor active site deprotonates the incoming PreQ1, allowing a nucleophilic attack on the C1' of the ribose to form the product. After dissociation, two additional enzymatic reactions on the tRNA convert PreQ1 to queuine (Q), resulting in the hypermodified nucleoside queuosine (7-(((4,5-cis-dihydroxy-2-cyclopenten-1-yl)amino)methyl)-7-deazaguanosine).</text>
</comment>
<comment type="catalytic activity">
    <reaction evidence="1">
        <text>7-aminomethyl-7-carbaguanine + guanosine(34) in tRNA = 7-aminomethyl-7-carbaguanosine(34) in tRNA + guanine</text>
        <dbReference type="Rhea" id="RHEA:24104"/>
        <dbReference type="Rhea" id="RHEA-COMP:10341"/>
        <dbReference type="Rhea" id="RHEA-COMP:10342"/>
        <dbReference type="ChEBI" id="CHEBI:16235"/>
        <dbReference type="ChEBI" id="CHEBI:58703"/>
        <dbReference type="ChEBI" id="CHEBI:74269"/>
        <dbReference type="ChEBI" id="CHEBI:82833"/>
        <dbReference type="EC" id="2.4.2.29"/>
    </reaction>
</comment>
<comment type="cofactor">
    <cofactor evidence="1">
        <name>Zn(2+)</name>
        <dbReference type="ChEBI" id="CHEBI:29105"/>
    </cofactor>
    <text evidence="1">Binds 1 zinc ion per subunit.</text>
</comment>
<comment type="pathway">
    <text evidence="1">tRNA modification; tRNA-queuosine biosynthesis.</text>
</comment>
<comment type="subunit">
    <text evidence="1">Homodimer. Within each dimer, one monomer is responsible for RNA recognition and catalysis, while the other monomer binds to the replacement base PreQ1.</text>
</comment>
<comment type="similarity">
    <text evidence="1">Belongs to the queuine tRNA-ribosyltransferase family.</text>
</comment>
<protein>
    <recommendedName>
        <fullName evidence="1">Queuine tRNA-ribosyltransferase</fullName>
        <ecNumber evidence="1">2.4.2.29</ecNumber>
    </recommendedName>
    <alternativeName>
        <fullName evidence="1">Guanine insertion enzyme</fullName>
    </alternativeName>
    <alternativeName>
        <fullName evidence="1">tRNA-guanine transglycosylase</fullName>
    </alternativeName>
</protein>
<feature type="chain" id="PRO_1000197999" description="Queuine tRNA-ribosyltransferase">
    <location>
        <begin position="1"/>
        <end position="388"/>
    </location>
</feature>
<feature type="region of interest" description="RNA binding" evidence="1">
    <location>
        <begin position="248"/>
        <end position="254"/>
    </location>
</feature>
<feature type="region of interest" description="RNA binding; important for wobble base 34 recognition" evidence="1">
    <location>
        <begin position="272"/>
        <end position="276"/>
    </location>
</feature>
<feature type="active site" description="Proton acceptor" evidence="1">
    <location>
        <position position="91"/>
    </location>
</feature>
<feature type="active site" description="Nucleophile" evidence="1">
    <location>
        <position position="267"/>
    </location>
</feature>
<feature type="binding site" evidence="1">
    <location>
        <begin position="91"/>
        <end position="95"/>
    </location>
    <ligand>
        <name>substrate</name>
    </ligand>
</feature>
<feature type="binding site" evidence="1">
    <location>
        <position position="145"/>
    </location>
    <ligand>
        <name>substrate</name>
    </ligand>
</feature>
<feature type="binding site" evidence="1">
    <location>
        <position position="190"/>
    </location>
    <ligand>
        <name>substrate</name>
    </ligand>
</feature>
<feature type="binding site" evidence="1">
    <location>
        <position position="217"/>
    </location>
    <ligand>
        <name>substrate</name>
    </ligand>
</feature>
<feature type="binding site" evidence="1">
    <location>
        <position position="305"/>
    </location>
    <ligand>
        <name>Zn(2+)</name>
        <dbReference type="ChEBI" id="CHEBI:29105"/>
    </ligand>
</feature>
<feature type="binding site" evidence="1">
    <location>
        <position position="307"/>
    </location>
    <ligand>
        <name>Zn(2+)</name>
        <dbReference type="ChEBI" id="CHEBI:29105"/>
    </ligand>
</feature>
<feature type="binding site" evidence="1">
    <location>
        <position position="310"/>
    </location>
    <ligand>
        <name>Zn(2+)</name>
        <dbReference type="ChEBI" id="CHEBI:29105"/>
    </ligand>
</feature>
<feature type="binding site" evidence="1">
    <location>
        <position position="336"/>
    </location>
    <ligand>
        <name>Zn(2+)</name>
        <dbReference type="ChEBI" id="CHEBI:29105"/>
    </ligand>
</feature>
<keyword id="KW-0328">Glycosyltransferase</keyword>
<keyword id="KW-0479">Metal-binding</keyword>
<keyword id="KW-0671">Queuosine biosynthesis</keyword>
<keyword id="KW-1185">Reference proteome</keyword>
<keyword id="KW-0808">Transferase</keyword>
<keyword id="KW-0819">tRNA processing</keyword>
<keyword id="KW-0862">Zinc</keyword>
<organism>
    <name type="scientific">Dictyoglomus turgidum (strain DSM 6724 / Z-1310)</name>
    <dbReference type="NCBI Taxonomy" id="515635"/>
    <lineage>
        <taxon>Bacteria</taxon>
        <taxon>Pseudomonadati</taxon>
        <taxon>Dictyoglomota</taxon>
        <taxon>Dictyoglomia</taxon>
        <taxon>Dictyoglomales</taxon>
        <taxon>Dictyoglomaceae</taxon>
        <taxon>Dictyoglomus</taxon>
    </lineage>
</organism>
<sequence>MIFEIIVRDKKTRARLGKLKTFHGEINTPVFMPVGTQGAVKTLSPEEVEKVGAEIILSNTYHLFLRPGHEIVRKGGGLHKFMGWEKPILTDSGGYQVFSLARLRRIDEDGIYFNSHIDGTRYFYTPELVMEIQKSLGSDIIMPLDICLGYGASYWETKEALEITLRWLKRSIDYKNNSNMDHQLLFGIVQGGFYKELRKEAVERMLNIDLPGLALGGISVGEPKDKMYEIIDYTVSLLPEEKPRYLMGVGAPEDLVVGVSMGIDMFDCVLPTRLARHGVFYTSKGRKNIKNAQYKEDFSPLEEDCDCYTCRKFTKAYIRHLFLQHETFSYRLLTIHNLRFLFRLMENIRKSIREGRLEEFKKEFLTEYLRDDRENRLEKEELWSKLLI</sequence>
<name>TGT_DICTD</name>
<proteinExistence type="inferred from homology"/>